<sequence length="282" mass="31696">MAKILYGNEVALKIKEDLNLRIDKLKEKNIIPKLAILRMGNKPDDIAYERSIIKSCEKLNIETKVEELNEDILEEDFLKLMESLNNEKEIHGILVFRPYPKHLNENIINSSIALNKDVDCMHPLNLERIFEGDLNGFMPCTPEAVIEILKYYDIDLKGKNIVIINRSMVVGKPLSMMVLSHNATVTICHSRTIDLPSITKKADIVVTAIGKAKLIKEEYFNEDSIVMDVSINIDENGKLCGDVDFENVKEKVGAITPVPKGVGSVTTTLLLKHIVDAAERNS</sequence>
<comment type="function">
    <text evidence="1">Catalyzes the oxidation of 5,10-methylenetetrahydrofolate to 5,10-methenyltetrahydrofolate and then the hydrolysis of 5,10-methenyltetrahydrofolate to 10-formyltetrahydrofolate.</text>
</comment>
<comment type="catalytic activity">
    <reaction evidence="1">
        <text>(6R)-5,10-methylene-5,6,7,8-tetrahydrofolate + NADP(+) = (6R)-5,10-methenyltetrahydrofolate + NADPH</text>
        <dbReference type="Rhea" id="RHEA:22812"/>
        <dbReference type="ChEBI" id="CHEBI:15636"/>
        <dbReference type="ChEBI" id="CHEBI:57455"/>
        <dbReference type="ChEBI" id="CHEBI:57783"/>
        <dbReference type="ChEBI" id="CHEBI:58349"/>
        <dbReference type="EC" id="1.5.1.5"/>
    </reaction>
</comment>
<comment type="catalytic activity">
    <reaction evidence="1">
        <text>(6R)-5,10-methenyltetrahydrofolate + H2O = (6R)-10-formyltetrahydrofolate + H(+)</text>
        <dbReference type="Rhea" id="RHEA:23700"/>
        <dbReference type="ChEBI" id="CHEBI:15377"/>
        <dbReference type="ChEBI" id="CHEBI:15378"/>
        <dbReference type="ChEBI" id="CHEBI:57455"/>
        <dbReference type="ChEBI" id="CHEBI:195366"/>
        <dbReference type="EC" id="3.5.4.9"/>
    </reaction>
</comment>
<comment type="pathway">
    <text evidence="1">One-carbon metabolism; tetrahydrofolate interconversion.</text>
</comment>
<comment type="subunit">
    <text evidence="1">Homodimer.</text>
</comment>
<comment type="similarity">
    <text evidence="1">Belongs to the tetrahydrofolate dehydrogenase/cyclohydrolase family.</text>
</comment>
<reference key="1">
    <citation type="journal article" date="2007" name="PLoS ONE">
        <title>Analysis of the neurotoxin complex genes in Clostridium botulinum A1-A4 and B1 strains: BoNT/A3, /Ba4 and /B1 clusters are located within plasmids.</title>
        <authorList>
            <person name="Smith T.J."/>
            <person name="Hill K.K."/>
            <person name="Foley B.T."/>
            <person name="Detter J.C."/>
            <person name="Munk A.C."/>
            <person name="Bruce D.C."/>
            <person name="Doggett N.A."/>
            <person name="Smith L.A."/>
            <person name="Marks J.D."/>
            <person name="Xie G."/>
            <person name="Brettin T.S."/>
        </authorList>
    </citation>
    <scope>NUCLEOTIDE SEQUENCE [LARGE SCALE GENOMIC DNA]</scope>
    <source>
        <strain>ATCC 19397 / Type A</strain>
    </source>
</reference>
<protein>
    <recommendedName>
        <fullName evidence="1">Bifunctional protein FolD</fullName>
    </recommendedName>
    <domain>
        <recommendedName>
            <fullName evidence="1">Methylenetetrahydrofolate dehydrogenase</fullName>
            <ecNumber evidence="1">1.5.1.5</ecNumber>
        </recommendedName>
    </domain>
    <domain>
        <recommendedName>
            <fullName evidence="1">Methenyltetrahydrofolate cyclohydrolase</fullName>
            <ecNumber evidence="1">3.5.4.9</ecNumber>
        </recommendedName>
    </domain>
</protein>
<dbReference type="EC" id="1.5.1.5" evidence="1"/>
<dbReference type="EC" id="3.5.4.9" evidence="1"/>
<dbReference type="EMBL" id="CP000726">
    <property type="protein sequence ID" value="ABS34087.1"/>
    <property type="molecule type" value="Genomic_DNA"/>
</dbReference>
<dbReference type="RefSeq" id="WP_011948819.1">
    <property type="nucleotide sequence ID" value="NC_009697.1"/>
</dbReference>
<dbReference type="SMR" id="A7FT56"/>
<dbReference type="KEGG" id="cba:CLB_1203"/>
<dbReference type="HOGENOM" id="CLU_034045_2_1_9"/>
<dbReference type="UniPathway" id="UPA00193"/>
<dbReference type="GO" id="GO:0005829">
    <property type="term" value="C:cytosol"/>
    <property type="evidence" value="ECO:0007669"/>
    <property type="project" value="TreeGrafter"/>
</dbReference>
<dbReference type="GO" id="GO:0004477">
    <property type="term" value="F:methenyltetrahydrofolate cyclohydrolase activity"/>
    <property type="evidence" value="ECO:0007669"/>
    <property type="project" value="UniProtKB-UniRule"/>
</dbReference>
<dbReference type="GO" id="GO:0004488">
    <property type="term" value="F:methylenetetrahydrofolate dehydrogenase (NADP+) activity"/>
    <property type="evidence" value="ECO:0007669"/>
    <property type="project" value="UniProtKB-UniRule"/>
</dbReference>
<dbReference type="GO" id="GO:0000105">
    <property type="term" value="P:L-histidine biosynthetic process"/>
    <property type="evidence" value="ECO:0007669"/>
    <property type="project" value="UniProtKB-KW"/>
</dbReference>
<dbReference type="GO" id="GO:0009086">
    <property type="term" value="P:methionine biosynthetic process"/>
    <property type="evidence" value="ECO:0007669"/>
    <property type="project" value="UniProtKB-KW"/>
</dbReference>
<dbReference type="GO" id="GO:0006164">
    <property type="term" value="P:purine nucleotide biosynthetic process"/>
    <property type="evidence" value="ECO:0007669"/>
    <property type="project" value="UniProtKB-KW"/>
</dbReference>
<dbReference type="GO" id="GO:0035999">
    <property type="term" value="P:tetrahydrofolate interconversion"/>
    <property type="evidence" value="ECO:0007669"/>
    <property type="project" value="UniProtKB-UniRule"/>
</dbReference>
<dbReference type="CDD" id="cd01080">
    <property type="entry name" value="NAD_bind_m-THF_DH_Cyclohyd"/>
    <property type="match status" value="1"/>
</dbReference>
<dbReference type="FunFam" id="3.40.50.720:FF:000094">
    <property type="entry name" value="Bifunctional protein FolD"/>
    <property type="match status" value="1"/>
</dbReference>
<dbReference type="FunFam" id="3.40.50.10860:FF:000005">
    <property type="entry name" value="C-1-tetrahydrofolate synthase, cytoplasmic, putative"/>
    <property type="match status" value="1"/>
</dbReference>
<dbReference type="Gene3D" id="3.40.50.10860">
    <property type="entry name" value="Leucine Dehydrogenase, chain A, domain 1"/>
    <property type="match status" value="1"/>
</dbReference>
<dbReference type="Gene3D" id="3.40.50.720">
    <property type="entry name" value="NAD(P)-binding Rossmann-like Domain"/>
    <property type="match status" value="1"/>
</dbReference>
<dbReference type="HAMAP" id="MF_01576">
    <property type="entry name" value="THF_DHG_CYH"/>
    <property type="match status" value="1"/>
</dbReference>
<dbReference type="InterPro" id="IPR046346">
    <property type="entry name" value="Aminoacid_DH-like_N_sf"/>
</dbReference>
<dbReference type="InterPro" id="IPR036291">
    <property type="entry name" value="NAD(P)-bd_dom_sf"/>
</dbReference>
<dbReference type="InterPro" id="IPR000672">
    <property type="entry name" value="THF_DH/CycHdrlase"/>
</dbReference>
<dbReference type="InterPro" id="IPR020630">
    <property type="entry name" value="THF_DH/CycHdrlase_cat_dom"/>
</dbReference>
<dbReference type="InterPro" id="IPR020631">
    <property type="entry name" value="THF_DH/CycHdrlase_NAD-bd_dom"/>
</dbReference>
<dbReference type="PANTHER" id="PTHR48099:SF5">
    <property type="entry name" value="C-1-TETRAHYDROFOLATE SYNTHASE, CYTOPLASMIC"/>
    <property type="match status" value="1"/>
</dbReference>
<dbReference type="PANTHER" id="PTHR48099">
    <property type="entry name" value="C-1-TETRAHYDROFOLATE SYNTHASE, CYTOPLASMIC-RELATED"/>
    <property type="match status" value="1"/>
</dbReference>
<dbReference type="Pfam" id="PF00763">
    <property type="entry name" value="THF_DHG_CYH"/>
    <property type="match status" value="1"/>
</dbReference>
<dbReference type="Pfam" id="PF02882">
    <property type="entry name" value="THF_DHG_CYH_C"/>
    <property type="match status" value="1"/>
</dbReference>
<dbReference type="PRINTS" id="PR00085">
    <property type="entry name" value="THFDHDRGNASE"/>
</dbReference>
<dbReference type="SUPFAM" id="SSF53223">
    <property type="entry name" value="Aminoacid dehydrogenase-like, N-terminal domain"/>
    <property type="match status" value="1"/>
</dbReference>
<dbReference type="SUPFAM" id="SSF51735">
    <property type="entry name" value="NAD(P)-binding Rossmann-fold domains"/>
    <property type="match status" value="1"/>
</dbReference>
<proteinExistence type="inferred from homology"/>
<gene>
    <name evidence="1" type="primary">folD</name>
    <name type="ordered locus">CLB_1203</name>
</gene>
<feature type="chain" id="PRO_1000069237" description="Bifunctional protein FolD">
    <location>
        <begin position="1"/>
        <end position="282"/>
    </location>
</feature>
<feature type="binding site" evidence="1">
    <location>
        <begin position="165"/>
        <end position="167"/>
    </location>
    <ligand>
        <name>NADP(+)</name>
        <dbReference type="ChEBI" id="CHEBI:58349"/>
    </ligand>
</feature>
<feature type="binding site" evidence="1">
    <location>
        <position position="190"/>
    </location>
    <ligand>
        <name>NADP(+)</name>
        <dbReference type="ChEBI" id="CHEBI:58349"/>
    </ligand>
</feature>
<feature type="binding site" evidence="1">
    <location>
        <position position="231"/>
    </location>
    <ligand>
        <name>NADP(+)</name>
        <dbReference type="ChEBI" id="CHEBI:58349"/>
    </ligand>
</feature>
<evidence type="ECO:0000255" key="1">
    <source>
        <dbReference type="HAMAP-Rule" id="MF_01576"/>
    </source>
</evidence>
<name>FOLD_CLOB1</name>
<keyword id="KW-0028">Amino-acid biosynthesis</keyword>
<keyword id="KW-0368">Histidine biosynthesis</keyword>
<keyword id="KW-0378">Hydrolase</keyword>
<keyword id="KW-0486">Methionine biosynthesis</keyword>
<keyword id="KW-0511">Multifunctional enzyme</keyword>
<keyword id="KW-0521">NADP</keyword>
<keyword id="KW-0554">One-carbon metabolism</keyword>
<keyword id="KW-0560">Oxidoreductase</keyword>
<keyword id="KW-0658">Purine biosynthesis</keyword>
<organism>
    <name type="scientific">Clostridium botulinum (strain ATCC 19397 / Type A)</name>
    <dbReference type="NCBI Taxonomy" id="441770"/>
    <lineage>
        <taxon>Bacteria</taxon>
        <taxon>Bacillati</taxon>
        <taxon>Bacillota</taxon>
        <taxon>Clostridia</taxon>
        <taxon>Eubacteriales</taxon>
        <taxon>Clostridiaceae</taxon>
        <taxon>Clostridium</taxon>
    </lineage>
</organism>
<accession>A7FT56</accession>